<sequence length="245" mass="26753">MGRLDGKVIVLTAAAQGIGRASALAFAREGAKVIATDINESKLQELESYRGIQTRVLDVTKKRQIDQFASEIERIDVLFNVAGFVHHGTILDCEEKDWDFSMNLNVRSMFLMIKAFLPKMLAQKSGNIINMSSVASSIKGVENRCVYSATKAAVIGLTKSVAADFIQQGIRCNCVCPGTVDTPSLQERIQARDNPKEALKTFLNRQKTGRFASAEEVALLCVYLASDESAYVTGNPVIIDGGWSL</sequence>
<comment type="function">
    <text evidence="2 3 4 5 6">NAD(H)-dependent dehydrogenase/reductase with a preference for cyclic substrates (By similarity). Catalyzes stereoselective conversion of 4-oxo-L-proline to cis-4-hydroxy-L-proline, likely a detoxification mechanism for ketoprolines (By similarity). Mediates the formation of 2,5-dihydroxybenzoate (2,5-DHBA), a siderophore that chelates free cytoplasmic iron and associates with LCN2, thereby regulating iron transport and homeostasis while protecting cells against free radical-induced oxidative stress. The iron-siderophore complex is imported into mitochondria, providing an iron source for mitochondrial metabolic processes in particular heme synthesis (PubMed:20550936, PubMed:24777603, PubMed:24863067). May act as a 3-hydroxybutyrate dehydrogenase (By similarity).</text>
</comment>
<comment type="function">
    <text evidence="6">(Microbial infection) May play a role in susceptibility to bacterial infection by providing an assimilable source of iron that is exploited by pathogenic bacteria. Host iron-siderophore complexes can be used by bacteria to promote their own growth and pathogenicity.</text>
</comment>
<comment type="catalytic activity">
    <reaction evidence="2 3">
        <text>cis-4-hydroxy-L-proline + NAD(+) = 4-oxo-L-proline + NADH + H(+)</text>
        <dbReference type="Rhea" id="RHEA:13601"/>
        <dbReference type="ChEBI" id="CHEBI:15378"/>
        <dbReference type="ChEBI" id="CHEBI:57540"/>
        <dbReference type="ChEBI" id="CHEBI:57945"/>
        <dbReference type="ChEBI" id="CHEBI:63727"/>
        <dbReference type="ChEBI" id="CHEBI:84813"/>
        <dbReference type="EC" id="1.1.1.104"/>
    </reaction>
    <physiologicalReaction direction="right-to-left" evidence="2 3">
        <dbReference type="Rhea" id="RHEA:13603"/>
    </physiologicalReaction>
</comment>
<comment type="catalytic activity">
    <reaction evidence="3">
        <text>(R)-3-hydroxybutanoate + NAD(+) = acetoacetate + NADH + H(+)</text>
        <dbReference type="Rhea" id="RHEA:20521"/>
        <dbReference type="ChEBI" id="CHEBI:10983"/>
        <dbReference type="ChEBI" id="CHEBI:13705"/>
        <dbReference type="ChEBI" id="CHEBI:15378"/>
        <dbReference type="ChEBI" id="CHEBI:57540"/>
        <dbReference type="ChEBI" id="CHEBI:57945"/>
        <dbReference type="EC" id="1.1.1.30"/>
    </reaction>
</comment>
<comment type="pathway">
    <text evidence="3">Amino-acid metabolism.</text>
</comment>
<comment type="pathway">
    <text evidence="4 6">Siderophore biosynthesis.</text>
</comment>
<comment type="subunit">
    <text evidence="3">Homotetramer.</text>
</comment>
<comment type="subcellular location">
    <subcellularLocation>
        <location evidence="3">Cytoplasm</location>
    </subcellularLocation>
</comment>
<comment type="tissue specificity">
    <text evidence="4 6">Detected in liver, spleen and macrophages (PubMed:24863067). Widely expressed.</text>
</comment>
<comment type="induction">
    <text evidence="6">Down-regulated upon E.coli infection to limit access to host iron pool. Down-regulated in macrophages by exposure to bacterial lipopolysaccharide (LPS).</text>
</comment>
<comment type="disruption phenotype">
    <text evidence="5">Mutant mice are born at the expected Mendelian frequency. They display microcytic and hypochromic anemia and iron overload in spleen and liver associated with heme toxicity when kept on high-iron diet. The plasma levels of ketone bodies is normal.</text>
</comment>
<comment type="similarity">
    <text evidence="7">Belongs to the short-chain dehydrogenases/reductases (SDR) family.</text>
</comment>
<comment type="caution">
    <text evidence="3 5">Postulated to act as a 3-hydroxybutyrate dehydrogenase, however its contribution to ketone body formation appears to be physiologically irrelevant since it has very low affinity for the substrate.</text>
</comment>
<gene>
    <name evidence="8" type="primary">Bdh2</name>
    <name type="synonym">Dhrs6</name>
</gene>
<dbReference type="EC" id="1.1.1.-" evidence="7"/>
<dbReference type="EC" id="1.1.1.30" evidence="3"/>
<dbReference type="EC" id="1.1.1.104" evidence="2 3"/>
<dbReference type="EMBL" id="BC036998">
    <property type="protein sequence ID" value="AAH36998.1"/>
    <property type="molecule type" value="mRNA"/>
</dbReference>
<dbReference type="CCDS" id="CCDS17853.1"/>
<dbReference type="RefSeq" id="NP_081484.1">
    <property type="nucleotide sequence ID" value="NM_027208.2"/>
</dbReference>
<dbReference type="SMR" id="Q8JZV9"/>
<dbReference type="BioGRID" id="213669">
    <property type="interactions" value="1"/>
</dbReference>
<dbReference type="FunCoup" id="Q8JZV9">
    <property type="interactions" value="379"/>
</dbReference>
<dbReference type="STRING" id="10090.ENSMUSP00000112683"/>
<dbReference type="iPTMnet" id="Q8JZV9"/>
<dbReference type="PhosphoSitePlus" id="Q8JZV9"/>
<dbReference type="jPOST" id="Q8JZV9"/>
<dbReference type="PaxDb" id="10090-ENSMUSP00000029817"/>
<dbReference type="ProteomicsDB" id="273600"/>
<dbReference type="Pumba" id="Q8JZV9"/>
<dbReference type="Antibodypedia" id="26090">
    <property type="antibodies" value="207 antibodies from 27 providers"/>
</dbReference>
<dbReference type="DNASU" id="69772"/>
<dbReference type="Ensembl" id="ENSMUST00000029817.11">
    <property type="protein sequence ID" value="ENSMUSP00000029817.8"/>
    <property type="gene ID" value="ENSMUSG00000028167.16"/>
</dbReference>
<dbReference type="GeneID" id="69772"/>
<dbReference type="KEGG" id="mmu:69772"/>
<dbReference type="UCSC" id="uc008rla.2">
    <property type="organism name" value="mouse"/>
</dbReference>
<dbReference type="AGR" id="MGI:1917022"/>
<dbReference type="CTD" id="56898"/>
<dbReference type="MGI" id="MGI:1917022">
    <property type="gene designation" value="Bdh2"/>
</dbReference>
<dbReference type="VEuPathDB" id="HostDB:ENSMUSG00000028167"/>
<dbReference type="eggNOG" id="KOG0725">
    <property type="taxonomic scope" value="Eukaryota"/>
</dbReference>
<dbReference type="GeneTree" id="ENSGT00940000156721"/>
<dbReference type="HOGENOM" id="CLU_010194_1_0_1"/>
<dbReference type="InParanoid" id="Q8JZV9"/>
<dbReference type="OrthoDB" id="47007at2759"/>
<dbReference type="PhylomeDB" id="Q8JZV9"/>
<dbReference type="TreeFam" id="TF328795"/>
<dbReference type="BRENDA" id="1.1.1.30">
    <property type="organism ID" value="3474"/>
</dbReference>
<dbReference type="Reactome" id="R-MMU-77111">
    <property type="pathway name" value="Synthesis of Ketone Bodies"/>
</dbReference>
<dbReference type="BioGRID-ORCS" id="69772">
    <property type="hits" value="3 hits in 80 CRISPR screens"/>
</dbReference>
<dbReference type="ChiTaRS" id="Bdh2">
    <property type="organism name" value="mouse"/>
</dbReference>
<dbReference type="PRO" id="PR:Q8JZV9"/>
<dbReference type="Proteomes" id="UP000000589">
    <property type="component" value="Chromosome 3"/>
</dbReference>
<dbReference type="RNAct" id="Q8JZV9">
    <property type="molecule type" value="protein"/>
</dbReference>
<dbReference type="Bgee" id="ENSMUSG00000028167">
    <property type="expression patterns" value="Expressed in right kidney and 145 other cell types or tissues"/>
</dbReference>
<dbReference type="ExpressionAtlas" id="Q8JZV9">
    <property type="expression patterns" value="baseline and differential"/>
</dbReference>
<dbReference type="GO" id="GO:0005737">
    <property type="term" value="C:cytoplasm"/>
    <property type="evidence" value="ECO:0000250"/>
    <property type="project" value="HGNC-UCL"/>
</dbReference>
<dbReference type="GO" id="GO:0005829">
    <property type="term" value="C:cytosol"/>
    <property type="evidence" value="ECO:0007669"/>
    <property type="project" value="Ensembl"/>
</dbReference>
<dbReference type="GO" id="GO:0003858">
    <property type="term" value="F:3-hydroxybutyrate dehydrogenase activity"/>
    <property type="evidence" value="ECO:0000250"/>
    <property type="project" value="HGNC-UCL"/>
</dbReference>
<dbReference type="GO" id="GO:0016617">
    <property type="term" value="F:4-oxoproline reductase activity"/>
    <property type="evidence" value="ECO:0007669"/>
    <property type="project" value="RHEA"/>
</dbReference>
<dbReference type="GO" id="GO:0051287">
    <property type="term" value="F:NAD binding"/>
    <property type="evidence" value="ECO:0000250"/>
    <property type="project" value="HGNC-UCL"/>
</dbReference>
<dbReference type="GO" id="GO:0016628">
    <property type="term" value="F:oxidoreductase activity, acting on the CH-CH group of donors, NAD or NADP as acceptor"/>
    <property type="evidence" value="ECO:0000315"/>
    <property type="project" value="UniProtKB"/>
</dbReference>
<dbReference type="GO" id="GO:0030855">
    <property type="term" value="P:epithelial cell differentiation"/>
    <property type="evidence" value="ECO:0007669"/>
    <property type="project" value="Ensembl"/>
</dbReference>
<dbReference type="GO" id="GO:0006635">
    <property type="term" value="P:fatty acid beta-oxidation"/>
    <property type="evidence" value="ECO:0000250"/>
    <property type="project" value="HGNC-UCL"/>
</dbReference>
<dbReference type="GO" id="GO:0042168">
    <property type="term" value="P:heme metabolic process"/>
    <property type="evidence" value="ECO:0000250"/>
    <property type="project" value="UniProtKB"/>
</dbReference>
<dbReference type="GO" id="GO:0019290">
    <property type="term" value="P:siderophore biosynthetic process"/>
    <property type="evidence" value="ECO:0000315"/>
    <property type="project" value="UniProtKB"/>
</dbReference>
<dbReference type="CDD" id="cd05368">
    <property type="entry name" value="DHRS6_like_SDR_c"/>
    <property type="match status" value="1"/>
</dbReference>
<dbReference type="FunFam" id="3.40.50.720:FF:000211">
    <property type="entry name" value="3-hydroxybutyrate dehydrogenase type 2"/>
    <property type="match status" value="1"/>
</dbReference>
<dbReference type="Gene3D" id="3.40.50.720">
    <property type="entry name" value="NAD(P)-binding Rossmann-like Domain"/>
    <property type="match status" value="1"/>
</dbReference>
<dbReference type="InterPro" id="IPR036291">
    <property type="entry name" value="NAD(P)-bd_dom_sf"/>
</dbReference>
<dbReference type="InterPro" id="IPR020904">
    <property type="entry name" value="Sc_DH/Rdtase_CS"/>
</dbReference>
<dbReference type="InterPro" id="IPR002347">
    <property type="entry name" value="SDR_fam"/>
</dbReference>
<dbReference type="InterPro" id="IPR051122">
    <property type="entry name" value="SDR_superfamily_enzyme"/>
</dbReference>
<dbReference type="PANTHER" id="PTHR43477:SF4">
    <property type="entry name" value="DEHYDROGENASE_REDUCTASE SDR FAMILY MEMBER 6"/>
    <property type="match status" value="1"/>
</dbReference>
<dbReference type="PANTHER" id="PTHR43477">
    <property type="entry name" value="DIHYDROANTICAPSIN 7-DEHYDROGENASE"/>
    <property type="match status" value="1"/>
</dbReference>
<dbReference type="Pfam" id="PF13561">
    <property type="entry name" value="adh_short_C2"/>
    <property type="match status" value="1"/>
</dbReference>
<dbReference type="PRINTS" id="PR00081">
    <property type="entry name" value="GDHRDH"/>
</dbReference>
<dbReference type="PRINTS" id="PR00080">
    <property type="entry name" value="SDRFAMILY"/>
</dbReference>
<dbReference type="SUPFAM" id="SSF51735">
    <property type="entry name" value="NAD(P)-binding Rossmann-fold domains"/>
    <property type="match status" value="1"/>
</dbReference>
<dbReference type="PROSITE" id="PS00061">
    <property type="entry name" value="ADH_SHORT"/>
    <property type="match status" value="1"/>
</dbReference>
<feature type="chain" id="PRO_0000042581" description="Dehydrogenase/reductase SDR family member 6">
    <location>
        <begin position="1"/>
        <end position="245"/>
    </location>
</feature>
<feature type="active site" description="Proton acceptor" evidence="4">
    <location>
        <position position="147"/>
    </location>
</feature>
<feature type="binding site" evidence="3">
    <location>
        <begin position="16"/>
        <end position="18"/>
    </location>
    <ligand>
        <name>NAD(+)</name>
        <dbReference type="ChEBI" id="CHEBI:57540"/>
    </ligand>
</feature>
<feature type="binding site" evidence="3">
    <location>
        <position position="37"/>
    </location>
    <ligand>
        <name>NAD(+)</name>
        <dbReference type="ChEBI" id="CHEBI:57540"/>
    </ligand>
</feature>
<feature type="binding site" evidence="3">
    <location>
        <position position="58"/>
    </location>
    <ligand>
        <name>NAD(+)</name>
        <dbReference type="ChEBI" id="CHEBI:57540"/>
    </ligand>
</feature>
<feature type="binding site" evidence="1">
    <location>
        <position position="144"/>
    </location>
    <ligand>
        <name>substrate</name>
    </ligand>
</feature>
<feature type="binding site" evidence="3">
    <location>
        <position position="151"/>
    </location>
    <ligand>
        <name>NAD(+)</name>
        <dbReference type="ChEBI" id="CHEBI:57540"/>
    </ligand>
</feature>
<feature type="binding site" evidence="3">
    <location>
        <begin position="180"/>
        <end position="184"/>
    </location>
    <ligand>
        <name>NAD(+)</name>
        <dbReference type="ChEBI" id="CHEBI:57540"/>
    </ligand>
</feature>
<feature type="binding site" evidence="1">
    <location>
        <position position="188"/>
    </location>
    <ligand>
        <name>substrate</name>
    </ligand>
</feature>
<feature type="binding site" evidence="1">
    <location>
        <position position="205"/>
    </location>
    <ligand>
        <name>substrate</name>
    </ligand>
</feature>
<feature type="mutagenesis site" description="Loss of function." evidence="4">
    <original>Y</original>
    <variation>F</variation>
    <location>
        <position position="147"/>
    </location>
</feature>
<evidence type="ECO:0000250" key="1"/>
<evidence type="ECO:0000250" key="2">
    <source>
        <dbReference type="UniProtKB" id="D4A1J4"/>
    </source>
</evidence>
<evidence type="ECO:0000250" key="3">
    <source>
        <dbReference type="UniProtKB" id="Q9BUT1"/>
    </source>
</evidence>
<evidence type="ECO:0000269" key="4">
    <source>
    </source>
</evidence>
<evidence type="ECO:0000269" key="5">
    <source>
    </source>
</evidence>
<evidence type="ECO:0000269" key="6">
    <source>
    </source>
</evidence>
<evidence type="ECO:0000305" key="7"/>
<evidence type="ECO:0000312" key="8">
    <source>
        <dbReference type="MGI" id="MGI:1917022"/>
    </source>
</evidence>
<name>DHRS6_MOUSE</name>
<organism>
    <name type="scientific">Mus musculus</name>
    <name type="common">Mouse</name>
    <dbReference type="NCBI Taxonomy" id="10090"/>
    <lineage>
        <taxon>Eukaryota</taxon>
        <taxon>Metazoa</taxon>
        <taxon>Chordata</taxon>
        <taxon>Craniata</taxon>
        <taxon>Vertebrata</taxon>
        <taxon>Euteleostomi</taxon>
        <taxon>Mammalia</taxon>
        <taxon>Eutheria</taxon>
        <taxon>Euarchontoglires</taxon>
        <taxon>Glires</taxon>
        <taxon>Rodentia</taxon>
        <taxon>Myomorpha</taxon>
        <taxon>Muroidea</taxon>
        <taxon>Muridae</taxon>
        <taxon>Murinae</taxon>
        <taxon>Mus</taxon>
        <taxon>Mus</taxon>
    </lineage>
</organism>
<accession>Q8JZV9</accession>
<reference key="1">
    <citation type="journal article" date="2004" name="Genome Res.">
        <title>The status, quality, and expansion of the NIH full-length cDNA project: the Mammalian Gene Collection (MGC).</title>
        <authorList>
            <consortium name="The MGC Project Team"/>
        </authorList>
    </citation>
    <scope>NUCLEOTIDE SEQUENCE [LARGE SCALE MRNA]</scope>
    <source>
        <strain>FVB/N</strain>
        <tissue>Kidney</tissue>
    </source>
</reference>
<reference key="2">
    <citation type="journal article" date="2010" name="Cell">
        <title>A mammalian siderophore synthesized by an enzyme with a bacterial homolog involved in enterobactin production.</title>
        <authorList>
            <person name="Devireddy L.R."/>
            <person name="Hart D.O."/>
            <person name="Goetz D.H."/>
            <person name="Green M.R."/>
        </authorList>
    </citation>
    <scope>FUNCTION</scope>
    <scope>PATHWAY</scope>
    <scope>TISSUE SPECIFICITY</scope>
    <scope>MUTAGENESIS OF TYR-147</scope>
    <scope>ACTIVE SITE</scope>
</reference>
<reference key="3">
    <citation type="journal article" date="2010" name="Cell">
        <title>A tissue-specific atlas of mouse protein phosphorylation and expression.</title>
        <authorList>
            <person name="Huttlin E.L."/>
            <person name="Jedrychowski M.P."/>
            <person name="Elias J.E."/>
            <person name="Goswami T."/>
            <person name="Rad R."/>
            <person name="Beausoleil S.A."/>
            <person name="Villen J."/>
            <person name="Haas W."/>
            <person name="Sowa M.E."/>
            <person name="Gygi S.P."/>
        </authorList>
    </citation>
    <scope>IDENTIFICATION BY MASS SPECTROMETRY [LARGE SCALE ANALYSIS]</scope>
    <source>
        <tissue>Kidney</tissue>
    </source>
</reference>
<reference key="4">
    <citation type="journal article" date="2014" name="J. Exp. Med.">
        <title>Regulation of mammalian siderophore 2,5-DHBA in the innate immune response to infection.</title>
        <authorList>
            <person name="Liu Z."/>
            <person name="Reba S."/>
            <person name="Chen W.D."/>
            <person name="Porwal S.K."/>
            <person name="Boom W.H."/>
            <person name="Petersen R.B."/>
            <person name="Rojas R."/>
            <person name="Viswanathan R."/>
            <person name="Devireddy L."/>
        </authorList>
    </citation>
    <scope>FUNCTION</scope>
    <scope>TISSUE SPECIFICITY</scope>
    <scope>INDUCTION</scope>
</reference>
<reference key="5">
    <citation type="journal article" date="2014" name="Mol. Cell. Biol.">
        <title>Endogenous siderophore 2,5-dihydroxybenzoic acid deficiency promotes anemia and splenic iron overload in mice.</title>
        <authorList>
            <person name="Liu Z."/>
            <person name="Ciocea A."/>
            <person name="Devireddy L."/>
        </authorList>
    </citation>
    <scope>FUNCTION</scope>
    <scope>DISRUPTION PHENOTYPE</scope>
</reference>
<protein>
    <recommendedName>
        <fullName>Dehydrogenase/reductase SDR family member 6</fullName>
        <ecNumber evidence="7">1.1.1.-</ecNumber>
    </recommendedName>
    <alternativeName>
        <fullName>(R)-beta-hydroxybutyrate dehydrogenase</fullName>
    </alternativeName>
    <alternativeName>
        <fullName>3-hydroxybutyrate dehydrogenase type 2</fullName>
        <ecNumber evidence="3">1.1.1.30</ecNumber>
    </alternativeName>
    <alternativeName>
        <fullName>4-oxo-L-proline reductase</fullName>
        <ecNumber evidence="2 3">1.1.1.104</ecNumber>
    </alternativeName>
    <alternativeName>
        <fullName>Oxidoreductase UCPA</fullName>
    </alternativeName>
    <alternativeName>
        <fullName>Short chain dehydrogenase/reductase family 15C member 1</fullName>
    </alternativeName>
</protein>
<keyword id="KW-0963">Cytoplasm</keyword>
<keyword id="KW-0443">Lipid metabolism</keyword>
<keyword id="KW-0520">NAD</keyword>
<keyword id="KW-0560">Oxidoreductase</keyword>
<keyword id="KW-1185">Reference proteome</keyword>
<proteinExistence type="evidence at protein level"/>